<gene>
    <name type="primary">MT-ND4L</name>
    <name type="synonym">MTND4L</name>
    <name type="synonym">NADH4L</name>
    <name type="synonym">ND4L</name>
</gene>
<proteinExistence type="inferred from homology"/>
<dbReference type="EC" id="7.1.1.2"/>
<dbReference type="EMBL" id="AF348081">
    <property type="protein sequence ID" value="AAK71094.1"/>
    <property type="molecule type" value="Genomic_DNA"/>
</dbReference>
<dbReference type="RefSeq" id="NP_149952.1">
    <property type="nucleotide sequence ID" value="NC_003040.1"/>
</dbReference>
<dbReference type="SMR" id="Q953I6"/>
<dbReference type="GeneID" id="803550"/>
<dbReference type="CTD" id="4539"/>
<dbReference type="GO" id="GO:0005743">
    <property type="term" value="C:mitochondrial inner membrane"/>
    <property type="evidence" value="ECO:0000250"/>
    <property type="project" value="UniProtKB"/>
</dbReference>
<dbReference type="GO" id="GO:0045271">
    <property type="term" value="C:respiratory chain complex I"/>
    <property type="evidence" value="ECO:0000250"/>
    <property type="project" value="UniProtKB"/>
</dbReference>
<dbReference type="GO" id="GO:0008137">
    <property type="term" value="F:NADH dehydrogenase (ubiquinone) activity"/>
    <property type="evidence" value="ECO:0000250"/>
    <property type="project" value="UniProtKB"/>
</dbReference>
<dbReference type="GO" id="GO:0042773">
    <property type="term" value="P:ATP synthesis coupled electron transport"/>
    <property type="evidence" value="ECO:0007669"/>
    <property type="project" value="InterPro"/>
</dbReference>
<dbReference type="FunFam" id="1.10.287.3510:FF:000002">
    <property type="entry name" value="NADH-ubiquinone oxidoreductase chain 4L"/>
    <property type="match status" value="1"/>
</dbReference>
<dbReference type="Gene3D" id="1.10.287.3510">
    <property type="match status" value="1"/>
</dbReference>
<dbReference type="InterPro" id="IPR001133">
    <property type="entry name" value="NADH_UbQ_OxRdtase_chain4L/K"/>
</dbReference>
<dbReference type="InterPro" id="IPR039428">
    <property type="entry name" value="NUOK/Mnh_C1-like"/>
</dbReference>
<dbReference type="PANTHER" id="PTHR11434:SF0">
    <property type="entry name" value="NADH-UBIQUINONE OXIDOREDUCTASE CHAIN 4L"/>
    <property type="match status" value="1"/>
</dbReference>
<dbReference type="PANTHER" id="PTHR11434">
    <property type="entry name" value="NADH-UBIQUINONE OXIDOREDUCTASE SUBUNIT ND4L"/>
    <property type="match status" value="1"/>
</dbReference>
<dbReference type="Pfam" id="PF00420">
    <property type="entry name" value="Oxidored_q2"/>
    <property type="match status" value="1"/>
</dbReference>
<protein>
    <recommendedName>
        <fullName>NADH-ubiquinone oxidoreductase chain 4L</fullName>
        <ecNumber>7.1.1.2</ecNumber>
    </recommendedName>
    <alternativeName>
        <fullName>NADH dehydrogenase subunit 4L</fullName>
    </alternativeName>
</protein>
<geneLocation type="mitochondrion"/>
<reference key="1">
    <citation type="submission" date="2001-02" db="EMBL/GenBank/DDBJ databases">
        <authorList>
            <person name="Lin Y.-H."/>
        </authorList>
    </citation>
    <scope>NUCLEOTIDE SEQUENCE [GENOMIC DNA]</scope>
</reference>
<organism>
    <name type="scientific">Pseudosoriculus fumidus</name>
    <name type="common">Taiwanese brown-toothed shrew</name>
    <name type="synonym">Episoriculus fumidus</name>
    <dbReference type="NCBI Taxonomy" id="3371150"/>
    <lineage>
        <taxon>Eukaryota</taxon>
        <taxon>Metazoa</taxon>
        <taxon>Chordata</taxon>
        <taxon>Craniata</taxon>
        <taxon>Vertebrata</taxon>
        <taxon>Euteleostomi</taxon>
        <taxon>Mammalia</taxon>
        <taxon>Eutheria</taxon>
        <taxon>Laurasiatheria</taxon>
        <taxon>Eulipotyphla</taxon>
        <taxon>Soricidae</taxon>
        <taxon>Pseudosoriculus</taxon>
    </lineage>
</organism>
<accession>Q953I6</accession>
<sequence>MSLVHMNIGLAFTVAFLGLLMYRSHLMSSLLCLEGMMLTLFIMSSIMVLNMHFTLASMLPIILLVFAACEAAVGLSLLVMVSNTYGVDYVQNLNLLQC</sequence>
<keyword id="KW-0249">Electron transport</keyword>
<keyword id="KW-0472">Membrane</keyword>
<keyword id="KW-0496">Mitochondrion</keyword>
<keyword id="KW-0999">Mitochondrion inner membrane</keyword>
<keyword id="KW-0520">NAD</keyword>
<keyword id="KW-0679">Respiratory chain</keyword>
<keyword id="KW-1278">Translocase</keyword>
<keyword id="KW-0812">Transmembrane</keyword>
<keyword id="KW-1133">Transmembrane helix</keyword>
<keyword id="KW-0813">Transport</keyword>
<keyword id="KW-0830">Ubiquinone</keyword>
<name>NU4LM_PSEFG</name>
<feature type="chain" id="PRO_0000275124" description="NADH-ubiquinone oxidoreductase chain 4L">
    <location>
        <begin position="1"/>
        <end position="98"/>
    </location>
</feature>
<feature type="transmembrane region" description="Helical" evidence="3">
    <location>
        <begin position="1"/>
        <end position="21"/>
    </location>
</feature>
<feature type="transmembrane region" description="Helical" evidence="3">
    <location>
        <begin position="29"/>
        <end position="49"/>
    </location>
</feature>
<feature type="transmembrane region" description="Helical" evidence="3">
    <location>
        <begin position="61"/>
        <end position="81"/>
    </location>
</feature>
<evidence type="ECO:0000250" key="1">
    <source>
        <dbReference type="UniProtKB" id="P03901"/>
    </source>
</evidence>
<evidence type="ECO:0000250" key="2">
    <source>
        <dbReference type="UniProtKB" id="P03902"/>
    </source>
</evidence>
<evidence type="ECO:0000255" key="3"/>
<evidence type="ECO:0000305" key="4"/>
<comment type="function">
    <text evidence="1">Core subunit of the mitochondrial membrane respiratory chain NADH dehydrogenase (Complex I) which catalyzes electron transfer from NADH through the respiratory chain, using ubiquinone as an electron acceptor. Part of the enzyme membrane arm which is embedded in the lipid bilayer and involved in proton translocation.</text>
</comment>
<comment type="catalytic activity">
    <reaction evidence="1">
        <text>a ubiquinone + NADH + 5 H(+)(in) = a ubiquinol + NAD(+) + 4 H(+)(out)</text>
        <dbReference type="Rhea" id="RHEA:29091"/>
        <dbReference type="Rhea" id="RHEA-COMP:9565"/>
        <dbReference type="Rhea" id="RHEA-COMP:9566"/>
        <dbReference type="ChEBI" id="CHEBI:15378"/>
        <dbReference type="ChEBI" id="CHEBI:16389"/>
        <dbReference type="ChEBI" id="CHEBI:17976"/>
        <dbReference type="ChEBI" id="CHEBI:57540"/>
        <dbReference type="ChEBI" id="CHEBI:57945"/>
        <dbReference type="EC" id="7.1.1.2"/>
    </reaction>
    <physiologicalReaction direction="left-to-right" evidence="1">
        <dbReference type="Rhea" id="RHEA:29092"/>
    </physiologicalReaction>
</comment>
<comment type="subunit">
    <text evidence="2">Core subunit of respiratory chain NADH dehydrogenase (Complex I) which is composed of 45 different subunits.</text>
</comment>
<comment type="subcellular location">
    <subcellularLocation>
        <location evidence="2">Mitochondrion inner membrane</location>
        <topology evidence="3">Multi-pass membrane protein</topology>
    </subcellularLocation>
</comment>
<comment type="similarity">
    <text evidence="4">Belongs to the complex I subunit 4L family.</text>
</comment>